<accession>A3CXS4</accession>
<comment type="function">
    <text evidence="1">Involved in the biosynthesis of the thiazole moiety of thiamine. Catalyzes the conversion of NAD and glycine to adenosine diphosphate 5-(2-hydroxyethyl)-4-methylthiazole-2-carboxylate (ADT), an adenylated thiazole intermediate, using free sulfide as a source of sulfur.</text>
</comment>
<comment type="catalytic activity">
    <reaction evidence="1">
        <text>hydrogen sulfide + glycine + NAD(+) = ADP-5-ethyl-4-methylthiazole-2-carboxylate + nicotinamide + 3 H2O + H(+)</text>
        <dbReference type="Rhea" id="RHEA:55704"/>
        <dbReference type="ChEBI" id="CHEBI:15377"/>
        <dbReference type="ChEBI" id="CHEBI:15378"/>
        <dbReference type="ChEBI" id="CHEBI:17154"/>
        <dbReference type="ChEBI" id="CHEBI:29919"/>
        <dbReference type="ChEBI" id="CHEBI:57305"/>
        <dbReference type="ChEBI" id="CHEBI:57540"/>
        <dbReference type="ChEBI" id="CHEBI:139151"/>
        <dbReference type="EC" id="2.4.2.59"/>
    </reaction>
</comment>
<comment type="cofactor">
    <cofactor evidence="1">
        <name>Fe(2+)</name>
        <dbReference type="ChEBI" id="CHEBI:29033"/>
    </cofactor>
</comment>
<comment type="pathway">
    <text evidence="1">Cofactor biosynthesis; thiamine diphosphate biosynthesis.</text>
</comment>
<comment type="subunit">
    <text evidence="1">Homooctamer; tetramer of dimers.</text>
</comment>
<comment type="similarity">
    <text evidence="1">Belongs to the THI4 family.</text>
</comment>
<gene>
    <name evidence="1" type="primary">thi4</name>
    <name type="ordered locus">Memar_2251</name>
</gene>
<keyword id="KW-0408">Iron</keyword>
<keyword id="KW-0479">Metal-binding</keyword>
<keyword id="KW-0520">NAD</keyword>
<keyword id="KW-0784">Thiamine biosynthesis</keyword>
<keyword id="KW-0808">Transferase</keyword>
<feature type="chain" id="PRO_0000300738" description="Thiamine thiazole synthase">
    <location>
        <begin position="1"/>
        <end position="254"/>
    </location>
</feature>
<feature type="binding site" description="in other chain" evidence="1">
    <location>
        <position position="36"/>
    </location>
    <ligand>
        <name>NAD(+)</name>
        <dbReference type="ChEBI" id="CHEBI:57540"/>
        <note>ligand shared between two adjacent protomers</note>
    </ligand>
</feature>
<feature type="binding site" description="in other chain" evidence="1">
    <location>
        <begin position="55"/>
        <end position="56"/>
    </location>
    <ligand>
        <name>NAD(+)</name>
        <dbReference type="ChEBI" id="CHEBI:57540"/>
        <note>ligand shared between two adjacent protomers</note>
    </ligand>
</feature>
<feature type="binding site" description="in other chain" evidence="1">
    <location>
        <position position="63"/>
    </location>
    <ligand>
        <name>NAD(+)</name>
        <dbReference type="ChEBI" id="CHEBI:57540"/>
        <note>ligand shared between two adjacent protomers</note>
    </ligand>
</feature>
<feature type="binding site" description="in other chain" evidence="1">
    <location>
        <position position="127"/>
    </location>
    <ligand>
        <name>NAD(+)</name>
        <dbReference type="ChEBI" id="CHEBI:57540"/>
        <note>ligand shared between two adjacent protomers</note>
    </ligand>
</feature>
<feature type="binding site" evidence="1">
    <location>
        <begin position="154"/>
        <end position="156"/>
    </location>
    <ligand>
        <name>NAD(+)</name>
        <dbReference type="ChEBI" id="CHEBI:57540"/>
        <note>ligand shared between two adjacent protomers</note>
    </ligand>
</feature>
<feature type="binding site" evidence="1">
    <location>
        <position position="156"/>
    </location>
    <ligand>
        <name>Fe cation</name>
        <dbReference type="ChEBI" id="CHEBI:24875"/>
        <note>ligand shared between two adjacent protomers</note>
    </ligand>
</feature>
<feature type="binding site" description="in other chain" evidence="1">
    <location>
        <position position="171"/>
    </location>
    <ligand>
        <name>Fe cation</name>
        <dbReference type="ChEBI" id="CHEBI:24875"/>
        <note>ligand shared between two adjacent protomers</note>
    </ligand>
</feature>
<feature type="binding site" description="in other chain" evidence="1">
    <location>
        <position position="219"/>
    </location>
    <ligand>
        <name>NAD(+)</name>
        <dbReference type="ChEBI" id="CHEBI:57540"/>
        <note>ligand shared between two adjacent protomers</note>
    </ligand>
</feature>
<feature type="binding site" evidence="1">
    <location>
        <position position="229"/>
    </location>
    <ligand>
        <name>glycine</name>
        <dbReference type="ChEBI" id="CHEBI:57305"/>
    </ligand>
</feature>
<dbReference type="EC" id="2.4.2.59" evidence="1"/>
<dbReference type="EMBL" id="CP000562">
    <property type="protein sequence ID" value="ABN58174.1"/>
    <property type="molecule type" value="Genomic_DNA"/>
</dbReference>
<dbReference type="RefSeq" id="WP_011845083.1">
    <property type="nucleotide sequence ID" value="NC_009051.1"/>
</dbReference>
<dbReference type="SMR" id="A3CXS4"/>
<dbReference type="STRING" id="368407.Memar_2251"/>
<dbReference type="GeneID" id="4846229"/>
<dbReference type="KEGG" id="mem:Memar_2251"/>
<dbReference type="eggNOG" id="arCOG00574">
    <property type="taxonomic scope" value="Archaea"/>
</dbReference>
<dbReference type="HOGENOM" id="CLU_053727_2_0_2"/>
<dbReference type="OrthoDB" id="4240at2157"/>
<dbReference type="UniPathway" id="UPA00060"/>
<dbReference type="Proteomes" id="UP000002146">
    <property type="component" value="Chromosome"/>
</dbReference>
<dbReference type="GO" id="GO:0005506">
    <property type="term" value="F:iron ion binding"/>
    <property type="evidence" value="ECO:0007669"/>
    <property type="project" value="UniProtKB-UniRule"/>
</dbReference>
<dbReference type="GO" id="GO:0016763">
    <property type="term" value="F:pentosyltransferase activity"/>
    <property type="evidence" value="ECO:0007669"/>
    <property type="project" value="UniProtKB-UniRule"/>
</dbReference>
<dbReference type="GO" id="GO:0009228">
    <property type="term" value="P:thiamine biosynthetic process"/>
    <property type="evidence" value="ECO:0007669"/>
    <property type="project" value="UniProtKB-KW"/>
</dbReference>
<dbReference type="GO" id="GO:0009229">
    <property type="term" value="P:thiamine diphosphate biosynthetic process"/>
    <property type="evidence" value="ECO:0007669"/>
    <property type="project" value="UniProtKB-UniRule"/>
</dbReference>
<dbReference type="GO" id="GO:0052837">
    <property type="term" value="P:thiazole biosynthetic process"/>
    <property type="evidence" value="ECO:0007669"/>
    <property type="project" value="UniProtKB-UniRule"/>
</dbReference>
<dbReference type="Gene3D" id="3.50.50.60">
    <property type="entry name" value="FAD/NAD(P)-binding domain"/>
    <property type="match status" value="1"/>
</dbReference>
<dbReference type="HAMAP" id="MF_00304">
    <property type="entry name" value="Thi4"/>
    <property type="match status" value="1"/>
</dbReference>
<dbReference type="InterPro" id="IPR036188">
    <property type="entry name" value="FAD/NAD-bd_sf"/>
</dbReference>
<dbReference type="InterPro" id="IPR002922">
    <property type="entry name" value="Thi4_fam"/>
</dbReference>
<dbReference type="InterPro" id="IPR022828">
    <property type="entry name" value="Thi4_prok"/>
</dbReference>
<dbReference type="NCBIfam" id="TIGR00292">
    <property type="entry name" value="sulfide-dependent adenosine diphosphate thiazole synthase"/>
    <property type="match status" value="1"/>
</dbReference>
<dbReference type="PANTHER" id="PTHR43422">
    <property type="entry name" value="THIAMINE THIAZOLE SYNTHASE"/>
    <property type="match status" value="1"/>
</dbReference>
<dbReference type="PANTHER" id="PTHR43422:SF3">
    <property type="entry name" value="THIAMINE THIAZOLE SYNTHASE"/>
    <property type="match status" value="1"/>
</dbReference>
<dbReference type="Pfam" id="PF01946">
    <property type="entry name" value="Thi4"/>
    <property type="match status" value="1"/>
</dbReference>
<dbReference type="SUPFAM" id="SSF51905">
    <property type="entry name" value="FAD/NAD(P)-binding domain"/>
    <property type="match status" value="1"/>
</dbReference>
<proteinExistence type="inferred from homology"/>
<reference key="1">
    <citation type="journal article" date="2009" name="Stand. Genomic Sci.">
        <title>Complete genome sequence of Methanoculleus marisnigri Romesser et al. 1981 type strain JR1.</title>
        <authorList>
            <person name="Anderson I.J."/>
            <person name="Sieprawska-Lupa M."/>
            <person name="Lapidus A."/>
            <person name="Nolan M."/>
            <person name="Copeland A."/>
            <person name="Glavina Del Rio T."/>
            <person name="Tice H."/>
            <person name="Dalin E."/>
            <person name="Barry K."/>
            <person name="Saunders E."/>
            <person name="Han C."/>
            <person name="Brettin T."/>
            <person name="Detter J.C."/>
            <person name="Bruce D."/>
            <person name="Mikhailova N."/>
            <person name="Pitluck S."/>
            <person name="Hauser L."/>
            <person name="Land M."/>
            <person name="Lucas S."/>
            <person name="Richardson P."/>
            <person name="Whitman W.B."/>
            <person name="Kyrpides N.C."/>
        </authorList>
    </citation>
    <scope>NUCLEOTIDE SEQUENCE [LARGE SCALE GENOMIC DNA]</scope>
    <source>
        <strain>ATCC 35101 / DSM 1498 / JR1</strain>
    </source>
</reference>
<protein>
    <recommendedName>
        <fullName evidence="1">Thiamine thiazole synthase</fullName>
        <ecNumber evidence="1">2.4.2.59</ecNumber>
    </recommendedName>
</protein>
<name>THI4_METMJ</name>
<organism>
    <name type="scientific">Methanoculleus marisnigri (strain ATCC 35101 / DSM 1498 / JR1)</name>
    <dbReference type="NCBI Taxonomy" id="368407"/>
    <lineage>
        <taxon>Archaea</taxon>
        <taxon>Methanobacteriati</taxon>
        <taxon>Methanobacteriota</taxon>
        <taxon>Stenosarchaea group</taxon>
        <taxon>Methanomicrobia</taxon>
        <taxon>Methanomicrobiales</taxon>
        <taxon>Methanomicrobiaceae</taxon>
        <taxon>Methanoculleus</taxon>
    </lineage>
</organism>
<evidence type="ECO:0000255" key="1">
    <source>
        <dbReference type="HAMAP-Rule" id="MF_00304"/>
    </source>
</evidence>
<sequence>MTLNEVTISRAILEEQHRALIDHLEMDAAVIGGGPSGLACAALLGEKGVKCALIEKKLSIGGGMWGGGMMFPRIVVQEDARRLLDRFGIAYKAFEEGYYVAKSVEAVAKLTAAACDAGVEFFNLTTVEDVMIRGDGRIGGLVVNWTPVDMAGLHVDPLTMACTCTVDATGHDAMIARMVEKKGGALTVKGESFMWAERAESQILAHTKEVFPGLFVTGMAANAVAGECRMGPIFGGMLLSGERAAELVAERLGR</sequence>